<keyword id="KW-0998">Cell outer membrane</keyword>
<keyword id="KW-1015">Disulfide bond</keyword>
<keyword id="KW-0406">Ion transport</keyword>
<keyword id="KW-0472">Membrane</keyword>
<keyword id="KW-0626">Porin</keyword>
<keyword id="KW-0677">Repeat</keyword>
<keyword id="KW-0812">Transmembrane</keyword>
<keyword id="KW-1134">Transmembrane beta strand</keyword>
<keyword id="KW-0813">Transport</keyword>
<feature type="chain" id="PRO_0000196252" description="Outer membrane protein A">
    <location>
        <begin position="1" status="less than"/>
        <end position="238" status="greater than"/>
    </location>
</feature>
<feature type="transmembrane region" description="Beta stranded" evidence="1">
    <location>
        <begin position="1" status="less than"/>
        <end position="8"/>
    </location>
</feature>
<feature type="transmembrane region" description="Beta stranded" evidence="1">
    <location>
        <begin position="13"/>
        <end position="21"/>
    </location>
</feature>
<feature type="transmembrane region" description="Beta stranded" evidence="1">
    <location>
        <begin position="43"/>
        <end position="52"/>
    </location>
</feature>
<feature type="transmembrane region" description="Beta stranded" evidence="1">
    <location>
        <begin position="57"/>
        <end position="64"/>
    </location>
</feature>
<feature type="transmembrane region" description="Beta stranded" evidence="1">
    <location>
        <begin position="83"/>
        <end position="91"/>
    </location>
</feature>
<feature type="repeat" description="1">
    <location>
        <begin position="104"/>
        <end position="105"/>
    </location>
</feature>
<feature type="repeat" description="2">
    <location>
        <begin position="106"/>
        <end position="107"/>
    </location>
</feature>
<feature type="repeat" description="3">
    <location>
        <begin position="108"/>
        <end position="109"/>
    </location>
</feature>
<feature type="domain" description="OmpA-like" evidence="2">
    <location>
        <begin position="111"/>
        <end position="238" status="greater than"/>
    </location>
</feature>
<feature type="region of interest" description="3 X 2 AA tandem repeats of A-P">
    <location>
        <begin position="104"/>
        <end position="109"/>
    </location>
</feature>
<feature type="site" description="Part of salt bridge gating mechanism" evidence="1">
    <location>
        <position position="60"/>
    </location>
</feature>
<feature type="disulfide bond" evidence="1">
    <location>
        <begin position="212"/>
        <end position="224"/>
    </location>
</feature>
<feature type="non-terminal residue">
    <location>
        <position position="1"/>
    </location>
</feature>
<feature type="non-terminal residue">
    <location>
        <position position="238"/>
    </location>
</feature>
<protein>
    <recommendedName>
        <fullName evidence="1">Outer membrane protein A</fullName>
    </recommendedName>
    <alternativeName>
        <fullName evidence="1">Outer membrane porin A</fullName>
    </alternativeName>
    <alternativeName>
        <fullName evidence="3">Outer membrane protein 3A</fullName>
    </alternativeName>
</protein>
<name>OMPA_CITFR</name>
<proteinExistence type="inferred from homology"/>
<evidence type="ECO:0000250" key="1">
    <source>
        <dbReference type="UniProtKB" id="P0A910"/>
    </source>
</evidence>
<evidence type="ECO:0000255" key="2">
    <source>
        <dbReference type="PROSITE-ProRule" id="PRU00473"/>
    </source>
</evidence>
<evidence type="ECO:0000303" key="3">
    <source>
    </source>
</evidence>
<evidence type="ECO:0000305" key="4"/>
<comment type="function">
    <text evidence="1">With TolR probably plays a role in maintaining the position of the peptidoglycan cell wall in the periplasm. Acts as a porin with low permeability that allows slow penetration of small solutes; an internal gate slows down solute passage.</text>
</comment>
<comment type="subunit">
    <text evidence="1">Monomer and homodimer.</text>
</comment>
<comment type="subcellular location">
    <subcellularLocation>
        <location evidence="1">Cell outer membrane</location>
        <topology evidence="1">Multi-pass membrane protein</topology>
    </subcellularLocation>
</comment>
<comment type="domain">
    <text evidence="1">The extracellular loops are most variable in sequence, and in some bacteria confer sensitivity to phage and/or colicins.</text>
</comment>
<comment type="similarity">
    <text evidence="4">Belongs to the outer membrane OOP (TC 1.B.6) superfamily. OmpA family.</text>
</comment>
<sequence>LTAKLGYPITDDLDIYTRLGGMVWRADAKNNEGFKDHDTGVSPVFAGGVEYAITPEIATRLEYQWTNNIGDANTVGGRPDNGLLSVGVSYRFGQQEEAAPVVVAPAPAPEVQTKHFTLKSDVLFNFNKATLKPEGQQALDQMYSQLSNLDPKDGSVVVLGFTDRIGSDAYNQGLSEKRAQSVVDYLISKGIPSDKISARGMGESNPVTGNTCDNVKARAALIDCLAPDRRVEIEVKGI</sequence>
<organism>
    <name type="scientific">Citrobacter freundii</name>
    <dbReference type="NCBI Taxonomy" id="546"/>
    <lineage>
        <taxon>Bacteria</taxon>
        <taxon>Pseudomonadati</taxon>
        <taxon>Pseudomonadota</taxon>
        <taxon>Gammaproteobacteria</taxon>
        <taxon>Enterobacterales</taxon>
        <taxon>Enterobacteriaceae</taxon>
        <taxon>Citrobacter</taxon>
        <taxon>Citrobacter freundii complex</taxon>
    </lineage>
</organism>
<gene>
    <name evidence="1" type="primary">ompA</name>
</gene>
<dbReference type="EMBL" id="M63354">
    <property type="protein sequence ID" value="AAA23095.1"/>
    <property type="molecule type" value="Genomic_DNA"/>
</dbReference>
<dbReference type="PIR" id="I40703">
    <property type="entry name" value="I40703"/>
</dbReference>
<dbReference type="SMR" id="P24016"/>
<dbReference type="STRING" id="1333848.CFNIH1_14820"/>
<dbReference type="GO" id="GO:0009279">
    <property type="term" value="C:cell outer membrane"/>
    <property type="evidence" value="ECO:0007669"/>
    <property type="project" value="UniProtKB-SubCell"/>
</dbReference>
<dbReference type="GO" id="GO:0046930">
    <property type="term" value="C:pore complex"/>
    <property type="evidence" value="ECO:0007669"/>
    <property type="project" value="UniProtKB-KW"/>
</dbReference>
<dbReference type="GO" id="GO:0015288">
    <property type="term" value="F:porin activity"/>
    <property type="evidence" value="ECO:0007669"/>
    <property type="project" value="UniProtKB-KW"/>
</dbReference>
<dbReference type="GO" id="GO:0006811">
    <property type="term" value="P:monoatomic ion transport"/>
    <property type="evidence" value="ECO:0007669"/>
    <property type="project" value="UniProtKB-KW"/>
</dbReference>
<dbReference type="CDD" id="cd07185">
    <property type="entry name" value="OmpA_C-like"/>
    <property type="match status" value="1"/>
</dbReference>
<dbReference type="FunFam" id="3.30.1330.60:FF:000004">
    <property type="entry name" value="Outer membrane protein A"/>
    <property type="match status" value="1"/>
</dbReference>
<dbReference type="Gene3D" id="2.40.160.20">
    <property type="match status" value="1"/>
</dbReference>
<dbReference type="Gene3D" id="3.30.1330.60">
    <property type="entry name" value="OmpA-like domain"/>
    <property type="match status" value="1"/>
</dbReference>
<dbReference type="InterPro" id="IPR050330">
    <property type="entry name" value="Bact_OuterMem_StrucFunc"/>
</dbReference>
<dbReference type="InterPro" id="IPR011250">
    <property type="entry name" value="OMP/PagP_b-brl"/>
</dbReference>
<dbReference type="InterPro" id="IPR006664">
    <property type="entry name" value="OMP_bac"/>
</dbReference>
<dbReference type="InterPro" id="IPR002368">
    <property type="entry name" value="OmpA"/>
</dbReference>
<dbReference type="InterPro" id="IPR006665">
    <property type="entry name" value="OmpA-like"/>
</dbReference>
<dbReference type="InterPro" id="IPR006690">
    <property type="entry name" value="OMPA-like_CS"/>
</dbReference>
<dbReference type="InterPro" id="IPR036737">
    <property type="entry name" value="OmpA-like_sf"/>
</dbReference>
<dbReference type="InterPro" id="IPR000498">
    <property type="entry name" value="OmpA-like_TM_dom"/>
</dbReference>
<dbReference type="NCBIfam" id="NF008071">
    <property type="entry name" value="PRK10808.1"/>
    <property type="match status" value="1"/>
</dbReference>
<dbReference type="PANTHER" id="PTHR30329:SF21">
    <property type="entry name" value="LIPOPROTEIN YIAD-RELATED"/>
    <property type="match status" value="1"/>
</dbReference>
<dbReference type="PANTHER" id="PTHR30329">
    <property type="entry name" value="STATOR ELEMENT OF FLAGELLAR MOTOR COMPLEX"/>
    <property type="match status" value="1"/>
</dbReference>
<dbReference type="Pfam" id="PF00691">
    <property type="entry name" value="OmpA"/>
    <property type="match status" value="1"/>
</dbReference>
<dbReference type="Pfam" id="PF01389">
    <property type="entry name" value="OmpA_membrane"/>
    <property type="match status" value="1"/>
</dbReference>
<dbReference type="PRINTS" id="PR01021">
    <property type="entry name" value="OMPADOMAIN"/>
</dbReference>
<dbReference type="PRINTS" id="PR01022">
    <property type="entry name" value="OUTRMMBRANEA"/>
</dbReference>
<dbReference type="SUPFAM" id="SSF56925">
    <property type="entry name" value="OMPA-like"/>
    <property type="match status" value="1"/>
</dbReference>
<dbReference type="SUPFAM" id="SSF103088">
    <property type="entry name" value="OmpA-like"/>
    <property type="match status" value="1"/>
</dbReference>
<dbReference type="PROSITE" id="PS01068">
    <property type="entry name" value="OMPA_1"/>
    <property type="match status" value="1"/>
</dbReference>
<dbReference type="PROSITE" id="PS51123">
    <property type="entry name" value="OMPA_2"/>
    <property type="match status" value="1"/>
</dbReference>
<accession>P24016</accession>
<reference key="1">
    <citation type="journal article" date="1991" name="J. Gen. Microbiol.">
        <title>Molecular and evolutionary relationships among enteric bacteria.</title>
        <authorList>
            <person name="Lawrence J.G."/>
            <person name="Ochman H."/>
            <person name="Hartl D.L."/>
        </authorList>
    </citation>
    <scope>NUCLEOTIDE SEQUENCE [GENOMIC DNA]</scope>
    <source>
        <strain>OS60</strain>
    </source>
</reference>